<reference key="1">
    <citation type="journal article" date="2000" name="Biochem. Biophys. Res. Commun.">
        <title>Identification of human PDE7B, a cAMP-specific phosphodiesterase.</title>
        <authorList>
            <person name="Sasaki T."/>
            <person name="Kotera J."/>
            <person name="Yuasa K."/>
            <person name="Omori K."/>
        </authorList>
    </citation>
    <scope>NUCLEOTIDE SEQUENCE [MRNA]</scope>
    <scope>FUNCTION</scope>
    <scope>CATALYTIC ACTIVITY</scope>
    <scope>BIOPHYSICOCHEMICAL PROPERTIES</scope>
    <scope>PATHWAY</scope>
    <scope>ACTIVITY REGULATION</scope>
    <scope>TISSUE SPECIFICITY</scope>
    <source>
        <tissue>Brain</tissue>
    </source>
</reference>
<reference key="2">
    <citation type="journal article" date="2000" name="Biochem. Biophys. Res. Commun.">
        <title>Cloning and characterisation of the human and mouse PDE7B, a novel cAMP-specific nucleotide phosphodiesterase.</title>
        <authorList>
            <person name="Gardner C.E."/>
            <person name="Robas N.M."/>
            <person name="Cawkill D."/>
            <person name="Fidock M.D."/>
        </authorList>
    </citation>
    <scope>NUCLEOTIDE SEQUENCE [MRNA]</scope>
    <scope>FUNCTION</scope>
    <scope>CATALYTIC ACTIVITY</scope>
    <scope>BIOPHYSICOCHEMICAL PROPERTIES</scope>
    <scope>PATHWAY</scope>
    <scope>ACTIVITY REGULATION</scope>
    <source>
        <tissue>Fetal brain</tissue>
    </source>
</reference>
<reference key="3">
    <citation type="journal article" date="2003" name="Nature">
        <title>The DNA sequence and analysis of human chromosome 6.</title>
        <authorList>
            <person name="Mungall A.J."/>
            <person name="Palmer S.A."/>
            <person name="Sims S.K."/>
            <person name="Edwards C.A."/>
            <person name="Ashurst J.L."/>
            <person name="Wilming L."/>
            <person name="Jones M.C."/>
            <person name="Horton R."/>
            <person name="Hunt S.E."/>
            <person name="Scott C.E."/>
            <person name="Gilbert J.G.R."/>
            <person name="Clamp M.E."/>
            <person name="Bethel G."/>
            <person name="Milne S."/>
            <person name="Ainscough R."/>
            <person name="Almeida J.P."/>
            <person name="Ambrose K.D."/>
            <person name="Andrews T.D."/>
            <person name="Ashwell R.I.S."/>
            <person name="Babbage A.K."/>
            <person name="Bagguley C.L."/>
            <person name="Bailey J."/>
            <person name="Banerjee R."/>
            <person name="Barker D.J."/>
            <person name="Barlow K.F."/>
            <person name="Bates K."/>
            <person name="Beare D.M."/>
            <person name="Beasley H."/>
            <person name="Beasley O."/>
            <person name="Bird C.P."/>
            <person name="Blakey S.E."/>
            <person name="Bray-Allen S."/>
            <person name="Brook J."/>
            <person name="Brown A.J."/>
            <person name="Brown J.Y."/>
            <person name="Burford D.C."/>
            <person name="Burrill W."/>
            <person name="Burton J."/>
            <person name="Carder C."/>
            <person name="Carter N.P."/>
            <person name="Chapman J.C."/>
            <person name="Clark S.Y."/>
            <person name="Clark G."/>
            <person name="Clee C.M."/>
            <person name="Clegg S."/>
            <person name="Cobley V."/>
            <person name="Collier R.E."/>
            <person name="Collins J.E."/>
            <person name="Colman L.K."/>
            <person name="Corby N.R."/>
            <person name="Coville G.J."/>
            <person name="Culley K.M."/>
            <person name="Dhami P."/>
            <person name="Davies J."/>
            <person name="Dunn M."/>
            <person name="Earthrowl M.E."/>
            <person name="Ellington A.E."/>
            <person name="Evans K.A."/>
            <person name="Faulkner L."/>
            <person name="Francis M.D."/>
            <person name="Frankish A."/>
            <person name="Frankland J."/>
            <person name="French L."/>
            <person name="Garner P."/>
            <person name="Garnett J."/>
            <person name="Ghori M.J."/>
            <person name="Gilby L.M."/>
            <person name="Gillson C.J."/>
            <person name="Glithero R.J."/>
            <person name="Grafham D.V."/>
            <person name="Grant M."/>
            <person name="Gribble S."/>
            <person name="Griffiths C."/>
            <person name="Griffiths M.N.D."/>
            <person name="Hall R."/>
            <person name="Halls K.S."/>
            <person name="Hammond S."/>
            <person name="Harley J.L."/>
            <person name="Hart E.A."/>
            <person name="Heath P.D."/>
            <person name="Heathcott R."/>
            <person name="Holmes S.J."/>
            <person name="Howden P.J."/>
            <person name="Howe K.L."/>
            <person name="Howell G.R."/>
            <person name="Huckle E."/>
            <person name="Humphray S.J."/>
            <person name="Humphries M.D."/>
            <person name="Hunt A.R."/>
            <person name="Johnson C.M."/>
            <person name="Joy A.A."/>
            <person name="Kay M."/>
            <person name="Keenan S.J."/>
            <person name="Kimberley A.M."/>
            <person name="King A."/>
            <person name="Laird G.K."/>
            <person name="Langford C."/>
            <person name="Lawlor S."/>
            <person name="Leongamornlert D.A."/>
            <person name="Leversha M."/>
            <person name="Lloyd C.R."/>
            <person name="Lloyd D.M."/>
            <person name="Loveland J.E."/>
            <person name="Lovell J."/>
            <person name="Martin S."/>
            <person name="Mashreghi-Mohammadi M."/>
            <person name="Maslen G.L."/>
            <person name="Matthews L."/>
            <person name="McCann O.T."/>
            <person name="McLaren S.J."/>
            <person name="McLay K."/>
            <person name="McMurray A."/>
            <person name="Moore M.J.F."/>
            <person name="Mullikin J.C."/>
            <person name="Niblett D."/>
            <person name="Nickerson T."/>
            <person name="Novik K.L."/>
            <person name="Oliver K."/>
            <person name="Overton-Larty E.K."/>
            <person name="Parker A."/>
            <person name="Patel R."/>
            <person name="Pearce A.V."/>
            <person name="Peck A.I."/>
            <person name="Phillimore B.J.C.T."/>
            <person name="Phillips S."/>
            <person name="Plumb R.W."/>
            <person name="Porter K.M."/>
            <person name="Ramsey Y."/>
            <person name="Ranby S.A."/>
            <person name="Rice C.M."/>
            <person name="Ross M.T."/>
            <person name="Searle S.M."/>
            <person name="Sehra H.K."/>
            <person name="Sheridan E."/>
            <person name="Skuce C.D."/>
            <person name="Smith S."/>
            <person name="Smith M."/>
            <person name="Spraggon L."/>
            <person name="Squares S.L."/>
            <person name="Steward C.A."/>
            <person name="Sycamore N."/>
            <person name="Tamlyn-Hall G."/>
            <person name="Tester J."/>
            <person name="Theaker A.J."/>
            <person name="Thomas D.W."/>
            <person name="Thorpe A."/>
            <person name="Tracey A."/>
            <person name="Tromans A."/>
            <person name="Tubby B."/>
            <person name="Wall M."/>
            <person name="Wallis J.M."/>
            <person name="West A.P."/>
            <person name="White S.S."/>
            <person name="Whitehead S.L."/>
            <person name="Whittaker H."/>
            <person name="Wild A."/>
            <person name="Willey D.J."/>
            <person name="Wilmer T.E."/>
            <person name="Wood J.M."/>
            <person name="Wray P.W."/>
            <person name="Wyatt J.C."/>
            <person name="Young L."/>
            <person name="Younger R.M."/>
            <person name="Bentley D.R."/>
            <person name="Coulson A."/>
            <person name="Durbin R.M."/>
            <person name="Hubbard T."/>
            <person name="Sulston J.E."/>
            <person name="Dunham I."/>
            <person name="Rogers J."/>
            <person name="Beck S."/>
        </authorList>
    </citation>
    <scope>NUCLEOTIDE SEQUENCE [LARGE SCALE GENOMIC DNA]</scope>
</reference>
<reference key="4">
    <citation type="submission" date="2005-09" db="EMBL/GenBank/DDBJ databases">
        <authorList>
            <person name="Mural R.J."/>
            <person name="Istrail S."/>
            <person name="Sutton G.G."/>
            <person name="Florea L."/>
            <person name="Halpern A.L."/>
            <person name="Mobarry C.M."/>
            <person name="Lippert R."/>
            <person name="Walenz B."/>
            <person name="Shatkay H."/>
            <person name="Dew I."/>
            <person name="Miller J.R."/>
            <person name="Flanigan M.J."/>
            <person name="Edwards N.J."/>
            <person name="Bolanos R."/>
            <person name="Fasulo D."/>
            <person name="Halldorsson B.V."/>
            <person name="Hannenhalli S."/>
            <person name="Turner R."/>
            <person name="Yooseph S."/>
            <person name="Lu F."/>
            <person name="Nusskern D.R."/>
            <person name="Shue B.C."/>
            <person name="Zheng X.H."/>
            <person name="Zhong F."/>
            <person name="Delcher A.L."/>
            <person name="Huson D.H."/>
            <person name="Kravitz S.A."/>
            <person name="Mouchard L."/>
            <person name="Reinert K."/>
            <person name="Remington K.A."/>
            <person name="Clark A.G."/>
            <person name="Waterman M.S."/>
            <person name="Eichler E.E."/>
            <person name="Adams M.D."/>
            <person name="Hunkapiller M.W."/>
            <person name="Myers E.W."/>
            <person name="Venter J.C."/>
        </authorList>
    </citation>
    <scope>NUCLEOTIDE SEQUENCE [LARGE SCALE GENOMIC DNA]</scope>
</reference>
<reference key="5">
    <citation type="journal article" date="2004" name="Genome Res.">
        <title>The status, quality, and expansion of the NIH full-length cDNA project: the Mammalian Gene Collection (MGC).</title>
        <authorList>
            <consortium name="The MGC Project Team"/>
        </authorList>
    </citation>
    <scope>NUCLEOTIDE SEQUENCE [LARGE SCALE MRNA]</scope>
    <source>
        <tissue>Brain</tissue>
    </source>
</reference>
<reference key="6">
    <citation type="journal article" date="2009" name="Sci. Signal.">
        <title>Quantitative phosphoproteomic analysis of T cell receptor signaling reveals system-wide modulation of protein-protein interactions.</title>
        <authorList>
            <person name="Mayya V."/>
            <person name="Lundgren D.H."/>
            <person name="Hwang S.-I."/>
            <person name="Rezaul K."/>
            <person name="Wu L."/>
            <person name="Eng J.K."/>
            <person name="Rodionov V."/>
            <person name="Han D.K."/>
        </authorList>
    </citation>
    <scope>IDENTIFICATION BY MASS SPECTROMETRY [LARGE SCALE ANALYSIS]</scope>
    <source>
        <tissue>Leukemic T-cell</tissue>
    </source>
</reference>
<evidence type="ECO:0000250" key="1">
    <source>
        <dbReference type="UniProtKB" id="O76083"/>
    </source>
</evidence>
<evidence type="ECO:0000250" key="2">
    <source>
        <dbReference type="UniProtKB" id="Q13946"/>
    </source>
</evidence>
<evidence type="ECO:0000250" key="3">
    <source>
        <dbReference type="UniProtKB" id="Q9QXQ1"/>
    </source>
</evidence>
<evidence type="ECO:0000255" key="4">
    <source>
        <dbReference type="PROSITE-ProRule" id="PRU01192"/>
    </source>
</evidence>
<evidence type="ECO:0000256" key="5">
    <source>
        <dbReference type="SAM" id="MobiDB-lite"/>
    </source>
</evidence>
<evidence type="ECO:0000269" key="6">
    <source>
    </source>
</evidence>
<evidence type="ECO:0000269" key="7">
    <source>
    </source>
</evidence>
<evidence type="ECO:0000303" key="8">
    <source>
    </source>
</evidence>
<evidence type="ECO:0000305" key="9"/>
<keyword id="KW-0114">cAMP</keyword>
<keyword id="KW-0378">Hydrolase</keyword>
<keyword id="KW-0479">Metal-binding</keyword>
<keyword id="KW-0597">Phosphoprotein</keyword>
<keyword id="KW-1267">Proteomics identification</keyword>
<keyword id="KW-1185">Reference proteome</keyword>
<comment type="function">
    <text evidence="6 7">Hydrolyzes the second messenger cAMP, which is a key regulator of many important physiological processes (PubMed:10814504, PubMed:10872825). May be involved in the control of cAMP-mediated neural activity and cAMP metabolism in the brain (PubMed:10814504).</text>
</comment>
<comment type="catalytic activity">
    <reaction evidence="6 7">
        <text>3',5'-cyclic AMP + H2O = AMP + H(+)</text>
        <dbReference type="Rhea" id="RHEA:25277"/>
        <dbReference type="ChEBI" id="CHEBI:15377"/>
        <dbReference type="ChEBI" id="CHEBI:15378"/>
        <dbReference type="ChEBI" id="CHEBI:58165"/>
        <dbReference type="ChEBI" id="CHEBI:456215"/>
        <dbReference type="EC" id="3.1.4.53"/>
    </reaction>
</comment>
<comment type="cofactor">
    <cofactor evidence="2">
        <name>a divalent metal cation</name>
        <dbReference type="ChEBI" id="CHEBI:60240"/>
    </cofactor>
    <text evidence="2">Binds 2 divalent metal cations per subunit (By similarity). Site 1 may preferentially bind zinc ions, while site 2 has a preference for magnesium and/or manganese ions (By similarity).</text>
</comment>
<comment type="activity regulation">
    <text evidence="6 7">Inhibited by dipyridamole, IBMX and SCH 51866 (PubMed:10814504, PubMed:10872825). Insensitive to zaprinast, rolipram, and milrinone (PubMed:10814504, PubMed:10872825).</text>
</comment>
<comment type="biophysicochemical properties">
    <kinetics>
        <KM evidence="6">0.13 uM for 3',5'-cyclic AMP</KM>
        <KM evidence="7">0.2 uM for 3',5'-cyclic AMP</KM>
    </kinetics>
</comment>
<comment type="pathway">
    <text evidence="6 7">Purine metabolism; 3',5'-cyclic AMP degradation; AMP from 3',5'-cyclic AMP: step 1/1.</text>
</comment>
<comment type="tissue specificity">
    <text evidence="6">Highly expressed in brain (PubMed:10814504). Also expressed in heart, liver, skeletal muscle and pancreas (PubMed:10814504).</text>
</comment>
<comment type="domain">
    <text evidence="9">Composed of a C-terminal catalytic domain containing two putative divalent metal sites and an N-terminal regulatory domain.</text>
</comment>
<comment type="similarity">
    <text evidence="9">Belongs to the cyclic nucleotide phosphodiesterase family. PDE7 subfamily.</text>
</comment>
<name>PDE7B_HUMAN</name>
<accession>Q9NP56</accession>
<accession>Q5W154</accession>
<gene>
    <name evidence="8" type="primary">PDE7B</name>
</gene>
<proteinExistence type="evidence at protein level"/>
<sequence length="450" mass="51835">MSCLMVERCGEILFENPDQNAKCVCMLGDIRLRGQTGVRAERRGSYPFIDFRLLNSTTYSGEIGTKKKVKRLLSFQRYFHASRLLRGIIPQAPLHLLDEDYLGQARHMLSKVGMWDFDIFLFDRLTNGNSLVTLLCHLFNTHGLIHHFKLDMVTLHRFLVMVQEDYHSQNPYHNAVHAADVTQAMHCYLKEPKLASFLTPLDIMLGLLAAAAHDVDHPGVNQPFLIKTNHHLANLYQNMSVLENHHWRSTIGMLRESRLLAHLPKEMTQDIEQQLGSLILATDINRQNEFLTRLKAHLHNKDLRLEDAQDRHFMLQIALKCADICNPCRIWEMSKQWSERVCEEFYRQGELEQKFELEISPLCNQQKDSIPSIQIGFMSYIVEPLFREWAHFTGNSTLSENMLGHLAHNKAQWKSLLPRQHRSRGSSGSGPDHDHAGQGTESEEQEGDSP</sequence>
<dbReference type="EC" id="3.1.4.53" evidence="6 7"/>
<dbReference type="EMBL" id="AB038040">
    <property type="protein sequence ID" value="BAA96537.1"/>
    <property type="molecule type" value="mRNA"/>
</dbReference>
<dbReference type="EMBL" id="AJ251860">
    <property type="protein sequence ID" value="CAB92441.1"/>
    <property type="molecule type" value="mRNA"/>
</dbReference>
<dbReference type="EMBL" id="AL360178">
    <property type="status" value="NOT_ANNOTATED_CDS"/>
    <property type="molecule type" value="Genomic_DNA"/>
</dbReference>
<dbReference type="EMBL" id="AL133319">
    <property type="status" value="NOT_ANNOTATED_CDS"/>
    <property type="molecule type" value="Genomic_DNA"/>
</dbReference>
<dbReference type="EMBL" id="AL138828">
    <property type="status" value="NOT_ANNOTATED_CDS"/>
    <property type="molecule type" value="Genomic_DNA"/>
</dbReference>
<dbReference type="EMBL" id="CH471051">
    <property type="protein sequence ID" value="EAW47957.1"/>
    <property type="molecule type" value="Genomic_DNA"/>
</dbReference>
<dbReference type="EMBL" id="BC075082">
    <property type="protein sequence ID" value="AAH75082.1"/>
    <property type="molecule type" value="mRNA"/>
</dbReference>
<dbReference type="EMBL" id="BC075083">
    <property type="protein sequence ID" value="AAH75083.1"/>
    <property type="molecule type" value="mRNA"/>
</dbReference>
<dbReference type="CCDS" id="CCDS5175.1"/>
<dbReference type="PIR" id="JC7266">
    <property type="entry name" value="JC7266"/>
</dbReference>
<dbReference type="RefSeq" id="NP_061818.1">
    <property type="nucleotide sequence ID" value="NM_018945.4"/>
</dbReference>
<dbReference type="SMR" id="Q9NP56"/>
<dbReference type="BioGRID" id="118010">
    <property type="interactions" value="20"/>
</dbReference>
<dbReference type="CORUM" id="Q9NP56"/>
<dbReference type="FunCoup" id="Q9NP56">
    <property type="interactions" value="632"/>
</dbReference>
<dbReference type="IntAct" id="Q9NP56">
    <property type="interactions" value="9"/>
</dbReference>
<dbReference type="STRING" id="9606.ENSP00000310661"/>
<dbReference type="BindingDB" id="Q9NP56"/>
<dbReference type="ChEMBL" id="CHEMBL4716"/>
<dbReference type="DrugBank" id="DB00201">
    <property type="generic name" value="Caffeine"/>
</dbReference>
<dbReference type="DrugBank" id="DB09283">
    <property type="generic name" value="Trapidil"/>
</dbReference>
<dbReference type="DrugCentral" id="Q9NP56"/>
<dbReference type="GuidetoPHARMACOLOGY" id="1306"/>
<dbReference type="iPTMnet" id="Q9NP56"/>
<dbReference type="PhosphoSitePlus" id="Q9NP56"/>
<dbReference type="BioMuta" id="PDE7B"/>
<dbReference type="DMDM" id="13626185"/>
<dbReference type="MassIVE" id="Q9NP56"/>
<dbReference type="PaxDb" id="9606-ENSP00000310661"/>
<dbReference type="PeptideAtlas" id="Q9NP56"/>
<dbReference type="ProteomicsDB" id="81887"/>
<dbReference type="Antibodypedia" id="19754">
    <property type="antibodies" value="292 antibodies from 29 providers"/>
</dbReference>
<dbReference type="DNASU" id="27115"/>
<dbReference type="Ensembl" id="ENST00000308191.11">
    <property type="protein sequence ID" value="ENSP00000310661.6"/>
    <property type="gene ID" value="ENSG00000171408.14"/>
</dbReference>
<dbReference type="GeneID" id="27115"/>
<dbReference type="KEGG" id="hsa:27115"/>
<dbReference type="MANE-Select" id="ENST00000308191.11">
    <property type="protein sequence ID" value="ENSP00000310661.6"/>
    <property type="RefSeq nucleotide sequence ID" value="NM_018945.4"/>
    <property type="RefSeq protein sequence ID" value="NP_061818.1"/>
</dbReference>
<dbReference type="UCSC" id="uc003qgp.4">
    <property type="organism name" value="human"/>
</dbReference>
<dbReference type="AGR" id="HGNC:8792"/>
<dbReference type="CTD" id="27115"/>
<dbReference type="DisGeNET" id="27115"/>
<dbReference type="GeneCards" id="PDE7B"/>
<dbReference type="HGNC" id="HGNC:8792">
    <property type="gene designation" value="PDE7B"/>
</dbReference>
<dbReference type="HPA" id="ENSG00000171408">
    <property type="expression patterns" value="Low tissue specificity"/>
</dbReference>
<dbReference type="MalaCards" id="PDE7B"/>
<dbReference type="MIM" id="604645">
    <property type="type" value="gene"/>
</dbReference>
<dbReference type="neXtProt" id="NX_Q9NP56"/>
<dbReference type="OpenTargets" id="ENSG00000171408"/>
<dbReference type="PharmGKB" id="PA33140"/>
<dbReference type="VEuPathDB" id="HostDB:ENSG00000171408"/>
<dbReference type="eggNOG" id="KOG3689">
    <property type="taxonomic scope" value="Eukaryota"/>
</dbReference>
<dbReference type="GeneTree" id="ENSGT00940000159413"/>
<dbReference type="HOGENOM" id="CLU_005940_6_5_1"/>
<dbReference type="InParanoid" id="Q9NP56"/>
<dbReference type="OMA" id="MVKLLWK"/>
<dbReference type="OrthoDB" id="189220at2759"/>
<dbReference type="PAN-GO" id="Q9NP56">
    <property type="GO annotations" value="2 GO annotations based on evolutionary models"/>
</dbReference>
<dbReference type="PhylomeDB" id="Q9NP56"/>
<dbReference type="TreeFam" id="TF314638"/>
<dbReference type="BRENDA" id="3.1.4.53">
    <property type="organism ID" value="2681"/>
</dbReference>
<dbReference type="PathwayCommons" id="Q9NP56"/>
<dbReference type="Reactome" id="R-HSA-418555">
    <property type="pathway name" value="G alpha (s) signalling events"/>
</dbReference>
<dbReference type="SignaLink" id="Q9NP56"/>
<dbReference type="UniPathway" id="UPA00762">
    <property type="reaction ID" value="UER00747"/>
</dbReference>
<dbReference type="BioGRID-ORCS" id="27115">
    <property type="hits" value="8 hits in 1164 CRISPR screens"/>
</dbReference>
<dbReference type="ChiTaRS" id="PDE7B">
    <property type="organism name" value="human"/>
</dbReference>
<dbReference type="GenomeRNAi" id="27115"/>
<dbReference type="Pharos" id="Q9NP56">
    <property type="development level" value="Tclin"/>
</dbReference>
<dbReference type="PRO" id="PR:Q9NP56"/>
<dbReference type="Proteomes" id="UP000005640">
    <property type="component" value="Chromosome 6"/>
</dbReference>
<dbReference type="RNAct" id="Q9NP56">
    <property type="molecule type" value="protein"/>
</dbReference>
<dbReference type="Bgee" id="ENSG00000171408">
    <property type="expression patterns" value="Expressed in germinal epithelium of ovary and 169 other cell types or tissues"/>
</dbReference>
<dbReference type="ExpressionAtlas" id="Q9NP56">
    <property type="expression patterns" value="baseline and differential"/>
</dbReference>
<dbReference type="GO" id="GO:0005829">
    <property type="term" value="C:cytosol"/>
    <property type="evidence" value="ECO:0000304"/>
    <property type="project" value="Reactome"/>
</dbReference>
<dbReference type="GO" id="GO:0045202">
    <property type="term" value="C:synapse"/>
    <property type="evidence" value="ECO:0007669"/>
    <property type="project" value="GOC"/>
</dbReference>
<dbReference type="GO" id="GO:0004115">
    <property type="term" value="F:3',5'-cyclic-AMP phosphodiesterase activity"/>
    <property type="evidence" value="ECO:0000314"/>
    <property type="project" value="UniProtKB"/>
</dbReference>
<dbReference type="GO" id="GO:0047555">
    <property type="term" value="F:3',5'-cyclic-GMP phosphodiesterase activity"/>
    <property type="evidence" value="ECO:0000318"/>
    <property type="project" value="GO_Central"/>
</dbReference>
<dbReference type="GO" id="GO:0046872">
    <property type="term" value="F:metal ion binding"/>
    <property type="evidence" value="ECO:0007669"/>
    <property type="project" value="UniProtKB-KW"/>
</dbReference>
<dbReference type="GO" id="GO:0006198">
    <property type="term" value="P:cAMP catabolic process"/>
    <property type="evidence" value="ECO:0007669"/>
    <property type="project" value="UniProtKB-UniPathway"/>
</dbReference>
<dbReference type="GO" id="GO:0019933">
    <property type="term" value="P:cAMP-mediated signaling"/>
    <property type="evidence" value="ECO:0000318"/>
    <property type="project" value="GO_Central"/>
</dbReference>
<dbReference type="GO" id="GO:0007268">
    <property type="term" value="P:chemical synaptic transmission"/>
    <property type="evidence" value="ECO:0000304"/>
    <property type="project" value="ProtInc"/>
</dbReference>
<dbReference type="GO" id="GO:0007165">
    <property type="term" value="P:signal transduction"/>
    <property type="evidence" value="ECO:0000304"/>
    <property type="project" value="ProtInc"/>
</dbReference>
<dbReference type="CDD" id="cd00077">
    <property type="entry name" value="HDc"/>
    <property type="match status" value="1"/>
</dbReference>
<dbReference type="FunFam" id="1.10.1300.10:FF:000004">
    <property type="entry name" value="Phosphodiesterase"/>
    <property type="match status" value="1"/>
</dbReference>
<dbReference type="Gene3D" id="1.10.1300.10">
    <property type="entry name" value="3'5'-cyclic nucleotide phosphodiesterase, catalytic domain"/>
    <property type="match status" value="1"/>
</dbReference>
<dbReference type="InterPro" id="IPR003607">
    <property type="entry name" value="HD/PDEase_dom"/>
</dbReference>
<dbReference type="InterPro" id="IPR023088">
    <property type="entry name" value="PDEase"/>
</dbReference>
<dbReference type="InterPro" id="IPR002073">
    <property type="entry name" value="PDEase_catalytic_dom"/>
</dbReference>
<dbReference type="InterPro" id="IPR036971">
    <property type="entry name" value="PDEase_catalytic_dom_sf"/>
</dbReference>
<dbReference type="InterPro" id="IPR023174">
    <property type="entry name" value="PDEase_CS"/>
</dbReference>
<dbReference type="PANTHER" id="PTHR11347">
    <property type="entry name" value="CYCLIC NUCLEOTIDE PHOSPHODIESTERASE"/>
    <property type="match status" value="1"/>
</dbReference>
<dbReference type="Pfam" id="PF00233">
    <property type="entry name" value="PDEase_I"/>
    <property type="match status" value="1"/>
</dbReference>
<dbReference type="PRINTS" id="PR00387">
    <property type="entry name" value="PDIESTERASE1"/>
</dbReference>
<dbReference type="SMART" id="SM00471">
    <property type="entry name" value="HDc"/>
    <property type="match status" value="1"/>
</dbReference>
<dbReference type="SUPFAM" id="SSF109604">
    <property type="entry name" value="HD-domain/PDEase-like"/>
    <property type="match status" value="1"/>
</dbReference>
<dbReference type="PROSITE" id="PS00126">
    <property type="entry name" value="PDEASE_I_1"/>
    <property type="match status" value="1"/>
</dbReference>
<dbReference type="PROSITE" id="PS51845">
    <property type="entry name" value="PDEASE_I_2"/>
    <property type="match status" value="1"/>
</dbReference>
<protein>
    <recommendedName>
        <fullName evidence="9">3',5'-cyclic-AMP phosphodiesterase 7B</fullName>
        <ecNumber evidence="6 7">3.1.4.53</ecNumber>
    </recommendedName>
    <alternativeName>
        <fullName evidence="8">cAMP-specific phosphodiesterase 7B</fullName>
    </alternativeName>
</protein>
<feature type="chain" id="PRO_0000198836" description="3',5'-cyclic-AMP phosphodiesterase 7B">
    <location>
        <begin position="1"/>
        <end position="450"/>
    </location>
</feature>
<feature type="domain" description="PDEase" evidence="4">
    <location>
        <begin position="97"/>
        <end position="420"/>
    </location>
</feature>
<feature type="region of interest" description="Disordered" evidence="5">
    <location>
        <begin position="418"/>
        <end position="450"/>
    </location>
</feature>
<feature type="compositionally biased region" description="Acidic residues" evidence="5">
    <location>
        <begin position="441"/>
        <end position="450"/>
    </location>
</feature>
<feature type="active site" description="Proton donor" evidence="1">
    <location>
        <position position="173"/>
    </location>
</feature>
<feature type="binding site" evidence="2">
    <location>
        <position position="177"/>
    </location>
    <ligand>
        <name>a divalent metal cation</name>
        <dbReference type="ChEBI" id="CHEBI:60240"/>
        <label>1</label>
    </ligand>
</feature>
<feature type="binding site" evidence="2">
    <location>
        <position position="213"/>
    </location>
    <ligand>
        <name>a divalent metal cation</name>
        <dbReference type="ChEBI" id="CHEBI:60240"/>
        <label>1</label>
    </ligand>
</feature>
<feature type="binding site" evidence="2">
    <location>
        <position position="214"/>
    </location>
    <ligand>
        <name>a divalent metal cation</name>
        <dbReference type="ChEBI" id="CHEBI:60240"/>
        <label>1</label>
    </ligand>
</feature>
<feature type="binding site" evidence="2">
    <location>
        <position position="214"/>
    </location>
    <ligand>
        <name>a divalent metal cation</name>
        <dbReference type="ChEBI" id="CHEBI:60240"/>
        <label>2</label>
    </ligand>
</feature>
<feature type="binding site" evidence="2">
    <location>
        <position position="323"/>
    </location>
    <ligand>
        <name>a divalent metal cation</name>
        <dbReference type="ChEBI" id="CHEBI:60240"/>
        <label>1</label>
    </ligand>
</feature>
<feature type="modified residue" description="Phosphoserine" evidence="3">
    <location>
        <position position="426"/>
    </location>
</feature>
<organism>
    <name type="scientific">Homo sapiens</name>
    <name type="common">Human</name>
    <dbReference type="NCBI Taxonomy" id="9606"/>
    <lineage>
        <taxon>Eukaryota</taxon>
        <taxon>Metazoa</taxon>
        <taxon>Chordata</taxon>
        <taxon>Craniata</taxon>
        <taxon>Vertebrata</taxon>
        <taxon>Euteleostomi</taxon>
        <taxon>Mammalia</taxon>
        <taxon>Eutheria</taxon>
        <taxon>Euarchontoglires</taxon>
        <taxon>Primates</taxon>
        <taxon>Haplorrhini</taxon>
        <taxon>Catarrhini</taxon>
        <taxon>Hominidae</taxon>
        <taxon>Homo</taxon>
    </lineage>
</organism>